<evidence type="ECO:0000255" key="1">
    <source>
        <dbReference type="HAMAP-Rule" id="MF_00395"/>
    </source>
</evidence>
<evidence type="ECO:0000305" key="2"/>
<organism>
    <name type="scientific">Cuscuta gronovii</name>
    <name type="common">Common dodder</name>
    <name type="synonym">Epithymum gronovii</name>
    <dbReference type="NCBI Taxonomy" id="35886"/>
    <lineage>
        <taxon>Eukaryota</taxon>
        <taxon>Viridiplantae</taxon>
        <taxon>Streptophyta</taxon>
        <taxon>Embryophyta</taxon>
        <taxon>Tracheophyta</taxon>
        <taxon>Spermatophyta</taxon>
        <taxon>Magnoliopsida</taxon>
        <taxon>eudicotyledons</taxon>
        <taxon>Gunneridae</taxon>
        <taxon>Pentapetalae</taxon>
        <taxon>asterids</taxon>
        <taxon>lamiids</taxon>
        <taxon>Solanales</taxon>
        <taxon>Convolvulaceae</taxon>
        <taxon>Cuscuteae</taxon>
        <taxon>Cuscuta</taxon>
        <taxon>Cuscuta subgen. Grammica</taxon>
        <taxon>Cuscuta sect. Oxycarpae</taxon>
    </lineage>
</organism>
<gene>
    <name evidence="1" type="primary">petN</name>
</gene>
<accession>A7M8Z4</accession>
<feature type="chain" id="PRO_0000355433" description="Cytochrome b6-f complex subunit 8">
    <location>
        <begin position="1"/>
        <end position="31"/>
    </location>
</feature>
<feature type="transmembrane region" description="Helical" evidence="1">
    <location>
        <begin position="5"/>
        <end position="25"/>
    </location>
</feature>
<keyword id="KW-0249">Electron transport</keyword>
<keyword id="KW-0472">Membrane</keyword>
<keyword id="KW-0602">Photosynthesis</keyword>
<keyword id="KW-0934">Plastid</keyword>
<keyword id="KW-0812">Transmembrane</keyword>
<keyword id="KW-1133">Transmembrane helix</keyword>
<keyword id="KW-0813">Transport</keyword>
<reference key="1">
    <citation type="journal article" date="2007" name="BMC Plant Biol.">
        <title>Complete DNA sequences of the plastid genomes of two parasitic flowering plant species, Cuscuta reflexa and Cuscuta gronovii.</title>
        <authorList>
            <person name="Funk H.T."/>
            <person name="Berg S."/>
            <person name="Krupinska K."/>
            <person name="Maier U.-G."/>
            <person name="Krause K."/>
        </authorList>
    </citation>
    <scope>NUCLEOTIDE SEQUENCE [LARGE SCALE GENOMIC DNA]</scope>
</reference>
<name>PETN_CUSGR</name>
<sequence length="31" mass="3429">MNIDIVSMAWAALMVVFTFSLSLVIWGRSGL</sequence>
<comment type="function">
    <text evidence="1">Component of the cytochrome b6-f complex, which mediates electron transfer between photosystem II (PSII) and photosystem I (PSI), cyclic electron flow around PSI, and state transitions.</text>
</comment>
<comment type="subunit">
    <text evidence="1">The 4 large subunits of the cytochrome b6-f complex are cytochrome b6, subunit IV (17 kDa polypeptide, PetD), cytochrome f and the Rieske protein, while the 4 small subunits are PetG, PetL, PetM and PetN. The complex functions as a dimer.</text>
</comment>
<comment type="subcellular location">
    <subcellularLocation>
        <location evidence="2">Plastid membrane</location>
        <topology evidence="1">Single-pass membrane protein</topology>
    </subcellularLocation>
</comment>
<comment type="similarity">
    <text evidence="1">Belongs to the PetN family.</text>
</comment>
<comment type="caution">
    <text evidence="2">Young tissue from this organism is photosynthetic and contains some thylakoids, although the photosynthetic activity does not exceed the light compensation point.</text>
</comment>
<geneLocation type="plastid"/>
<proteinExistence type="inferred from homology"/>
<protein>
    <recommendedName>
        <fullName evidence="1">Cytochrome b6-f complex subunit 8</fullName>
    </recommendedName>
    <alternativeName>
        <fullName evidence="1">Cytochrome b6-f complex subunit PetN</fullName>
    </alternativeName>
    <alternativeName>
        <fullName evidence="1">Cytochrome b6-f complex subunit VIII</fullName>
    </alternativeName>
</protein>
<dbReference type="EMBL" id="AM711639">
    <property type="protein sequence ID" value="CAM98322.1"/>
    <property type="molecule type" value="Genomic_DNA"/>
</dbReference>
<dbReference type="RefSeq" id="YP_001430036.1">
    <property type="nucleotide sequence ID" value="NC_009765.1"/>
</dbReference>
<dbReference type="SMR" id="A7M8Z4"/>
<dbReference type="GeneID" id="5536743"/>
<dbReference type="GO" id="GO:0009512">
    <property type="term" value="C:cytochrome b6f complex"/>
    <property type="evidence" value="ECO:0007669"/>
    <property type="project" value="InterPro"/>
</dbReference>
<dbReference type="GO" id="GO:0042170">
    <property type="term" value="C:plastid membrane"/>
    <property type="evidence" value="ECO:0007669"/>
    <property type="project" value="UniProtKB-SubCell"/>
</dbReference>
<dbReference type="GO" id="GO:0042651">
    <property type="term" value="C:thylakoid membrane"/>
    <property type="evidence" value="ECO:0007669"/>
    <property type="project" value="UniProtKB-UniRule"/>
</dbReference>
<dbReference type="GO" id="GO:0045158">
    <property type="term" value="F:electron transporter, transferring electrons within cytochrome b6/f complex of photosystem II activity"/>
    <property type="evidence" value="ECO:0007669"/>
    <property type="project" value="InterPro"/>
</dbReference>
<dbReference type="GO" id="GO:0017004">
    <property type="term" value="P:cytochrome complex assembly"/>
    <property type="evidence" value="ECO:0007669"/>
    <property type="project" value="UniProtKB-UniRule"/>
</dbReference>
<dbReference type="GO" id="GO:0015979">
    <property type="term" value="P:photosynthesis"/>
    <property type="evidence" value="ECO:0007669"/>
    <property type="project" value="UniProtKB-KW"/>
</dbReference>
<dbReference type="HAMAP" id="MF_00395">
    <property type="entry name" value="Cytb6_f_PetN"/>
    <property type="match status" value="1"/>
</dbReference>
<dbReference type="InterPro" id="IPR036143">
    <property type="entry name" value="Cytochr_b6-f_cplx_su8_sf"/>
</dbReference>
<dbReference type="InterPro" id="IPR005497">
    <property type="entry name" value="Cytochrome_b6-f_cplx_su8"/>
</dbReference>
<dbReference type="Pfam" id="PF03742">
    <property type="entry name" value="PetN"/>
    <property type="match status" value="1"/>
</dbReference>
<dbReference type="SUPFAM" id="SSF103451">
    <property type="entry name" value="PetN subunit of the cytochrome b6f complex"/>
    <property type="match status" value="1"/>
</dbReference>